<gene>
    <name evidence="1" type="primary">hisB</name>
    <name type="ordered locus">ABO_2281</name>
</gene>
<sequence length="204" mass="22389">MSKRSATVERNTLETQIQATINLDGTGQCTLDTGLPFLEHMLDQVARHGLVDLDIKAKGDLHIDAHHTVEDIGITLGQAFAKAVGDKKGVRRYGHAYVPLDEALSRVVLDLSGRPGLEMFVEFTRGSIGGFDVDLFYEFFQGFVNHAMITLHIDNLRGKNAHHQAETVFKAFGRALRMAVEPDPRMDGITPSTKGTLSESGDSQ</sequence>
<proteinExistence type="inferred from homology"/>
<comment type="catalytic activity">
    <reaction evidence="1">
        <text>D-erythro-1-(imidazol-4-yl)glycerol 3-phosphate = 3-(imidazol-4-yl)-2-oxopropyl phosphate + H2O</text>
        <dbReference type="Rhea" id="RHEA:11040"/>
        <dbReference type="ChEBI" id="CHEBI:15377"/>
        <dbReference type="ChEBI" id="CHEBI:57766"/>
        <dbReference type="ChEBI" id="CHEBI:58278"/>
        <dbReference type="EC" id="4.2.1.19"/>
    </reaction>
</comment>
<comment type="pathway">
    <text evidence="1">Amino-acid biosynthesis; L-histidine biosynthesis; L-histidine from 5-phospho-alpha-D-ribose 1-diphosphate: step 6/9.</text>
</comment>
<comment type="subcellular location">
    <subcellularLocation>
        <location evidence="1">Cytoplasm</location>
    </subcellularLocation>
</comment>
<comment type="similarity">
    <text evidence="1">Belongs to the imidazoleglycerol-phosphate dehydratase family.</text>
</comment>
<evidence type="ECO:0000255" key="1">
    <source>
        <dbReference type="HAMAP-Rule" id="MF_00076"/>
    </source>
</evidence>
<evidence type="ECO:0000256" key="2">
    <source>
        <dbReference type="SAM" id="MobiDB-lite"/>
    </source>
</evidence>
<protein>
    <recommendedName>
        <fullName evidence="1">Imidazoleglycerol-phosphate dehydratase</fullName>
        <shortName evidence="1">IGPD</shortName>
        <ecNumber evidence="1">4.2.1.19</ecNumber>
    </recommendedName>
</protein>
<dbReference type="EC" id="4.2.1.19" evidence="1"/>
<dbReference type="EMBL" id="AM286690">
    <property type="protein sequence ID" value="CAL17729.1"/>
    <property type="molecule type" value="Genomic_DNA"/>
</dbReference>
<dbReference type="RefSeq" id="WP_011589556.1">
    <property type="nucleotide sequence ID" value="NC_008260.1"/>
</dbReference>
<dbReference type="SMR" id="Q0VM69"/>
<dbReference type="STRING" id="393595.ABO_2281"/>
<dbReference type="KEGG" id="abo:ABO_2281"/>
<dbReference type="eggNOG" id="COG0131">
    <property type="taxonomic scope" value="Bacteria"/>
</dbReference>
<dbReference type="HOGENOM" id="CLU_044308_2_0_6"/>
<dbReference type="OrthoDB" id="9790411at2"/>
<dbReference type="UniPathway" id="UPA00031">
    <property type="reaction ID" value="UER00011"/>
</dbReference>
<dbReference type="Proteomes" id="UP000008871">
    <property type="component" value="Chromosome"/>
</dbReference>
<dbReference type="GO" id="GO:0005737">
    <property type="term" value="C:cytoplasm"/>
    <property type="evidence" value="ECO:0007669"/>
    <property type="project" value="UniProtKB-SubCell"/>
</dbReference>
<dbReference type="GO" id="GO:0004424">
    <property type="term" value="F:imidazoleglycerol-phosphate dehydratase activity"/>
    <property type="evidence" value="ECO:0007669"/>
    <property type="project" value="UniProtKB-UniRule"/>
</dbReference>
<dbReference type="GO" id="GO:0000105">
    <property type="term" value="P:L-histidine biosynthetic process"/>
    <property type="evidence" value="ECO:0007669"/>
    <property type="project" value="UniProtKB-UniRule"/>
</dbReference>
<dbReference type="CDD" id="cd07914">
    <property type="entry name" value="IGPD"/>
    <property type="match status" value="1"/>
</dbReference>
<dbReference type="FunFam" id="3.30.230.40:FF:000002">
    <property type="entry name" value="Imidazoleglycerol-phosphate dehydratase"/>
    <property type="match status" value="1"/>
</dbReference>
<dbReference type="FunFam" id="3.30.230.40:FF:000003">
    <property type="entry name" value="Imidazoleglycerol-phosphate dehydratase HisB"/>
    <property type="match status" value="1"/>
</dbReference>
<dbReference type="Gene3D" id="3.30.230.40">
    <property type="entry name" value="Imidazole glycerol phosphate dehydratase, domain 1"/>
    <property type="match status" value="2"/>
</dbReference>
<dbReference type="HAMAP" id="MF_00076">
    <property type="entry name" value="HisB"/>
    <property type="match status" value="1"/>
</dbReference>
<dbReference type="InterPro" id="IPR038494">
    <property type="entry name" value="IGPD_sf"/>
</dbReference>
<dbReference type="InterPro" id="IPR000807">
    <property type="entry name" value="ImidazoleglycerolP_deHydtase"/>
</dbReference>
<dbReference type="InterPro" id="IPR020565">
    <property type="entry name" value="ImidazoleglycerP_deHydtase_CS"/>
</dbReference>
<dbReference type="InterPro" id="IPR020568">
    <property type="entry name" value="Ribosomal_Su5_D2-typ_SF"/>
</dbReference>
<dbReference type="NCBIfam" id="NF002106">
    <property type="entry name" value="PRK00951.1-1"/>
    <property type="match status" value="1"/>
</dbReference>
<dbReference type="NCBIfam" id="NF002109">
    <property type="entry name" value="PRK00951.1-5"/>
    <property type="match status" value="1"/>
</dbReference>
<dbReference type="NCBIfam" id="NF002111">
    <property type="entry name" value="PRK00951.2-1"/>
    <property type="match status" value="1"/>
</dbReference>
<dbReference type="NCBIfam" id="NF002114">
    <property type="entry name" value="PRK00951.2-4"/>
    <property type="match status" value="1"/>
</dbReference>
<dbReference type="PANTHER" id="PTHR23133:SF2">
    <property type="entry name" value="IMIDAZOLEGLYCEROL-PHOSPHATE DEHYDRATASE"/>
    <property type="match status" value="1"/>
</dbReference>
<dbReference type="PANTHER" id="PTHR23133">
    <property type="entry name" value="IMIDAZOLEGLYCEROL-PHOSPHATE DEHYDRATASE HIS7"/>
    <property type="match status" value="1"/>
</dbReference>
<dbReference type="Pfam" id="PF00475">
    <property type="entry name" value="IGPD"/>
    <property type="match status" value="1"/>
</dbReference>
<dbReference type="SUPFAM" id="SSF54211">
    <property type="entry name" value="Ribosomal protein S5 domain 2-like"/>
    <property type="match status" value="2"/>
</dbReference>
<dbReference type="PROSITE" id="PS00954">
    <property type="entry name" value="IGP_DEHYDRATASE_1"/>
    <property type="match status" value="1"/>
</dbReference>
<dbReference type="PROSITE" id="PS00955">
    <property type="entry name" value="IGP_DEHYDRATASE_2"/>
    <property type="match status" value="1"/>
</dbReference>
<reference key="1">
    <citation type="journal article" date="2006" name="Nat. Biotechnol.">
        <title>Genome sequence of the ubiquitous hydrocarbon-degrading marine bacterium Alcanivorax borkumensis.</title>
        <authorList>
            <person name="Schneiker S."/>
            <person name="Martins dos Santos V.A.P."/>
            <person name="Bartels D."/>
            <person name="Bekel T."/>
            <person name="Brecht M."/>
            <person name="Buhrmester J."/>
            <person name="Chernikova T.N."/>
            <person name="Denaro R."/>
            <person name="Ferrer M."/>
            <person name="Gertler C."/>
            <person name="Goesmann A."/>
            <person name="Golyshina O.V."/>
            <person name="Kaminski F."/>
            <person name="Khachane A.N."/>
            <person name="Lang S."/>
            <person name="Linke B."/>
            <person name="McHardy A.C."/>
            <person name="Meyer F."/>
            <person name="Nechitaylo T."/>
            <person name="Puehler A."/>
            <person name="Regenhardt D."/>
            <person name="Rupp O."/>
            <person name="Sabirova J.S."/>
            <person name="Selbitschka W."/>
            <person name="Yakimov M.M."/>
            <person name="Timmis K.N."/>
            <person name="Vorhoelter F.-J."/>
            <person name="Weidner S."/>
            <person name="Kaiser O."/>
            <person name="Golyshin P.N."/>
        </authorList>
    </citation>
    <scope>NUCLEOTIDE SEQUENCE [LARGE SCALE GENOMIC DNA]</scope>
    <source>
        <strain>ATCC 700651 / DSM 11573 / NCIMB 13689 / SK2</strain>
    </source>
</reference>
<name>HIS7_ALCBS</name>
<keyword id="KW-0028">Amino-acid biosynthesis</keyword>
<keyword id="KW-0963">Cytoplasm</keyword>
<keyword id="KW-0368">Histidine biosynthesis</keyword>
<keyword id="KW-0456">Lyase</keyword>
<keyword id="KW-1185">Reference proteome</keyword>
<feature type="chain" id="PRO_1000010242" description="Imidazoleglycerol-phosphate dehydratase">
    <location>
        <begin position="1"/>
        <end position="204"/>
    </location>
</feature>
<feature type="region of interest" description="Disordered" evidence="2">
    <location>
        <begin position="183"/>
        <end position="204"/>
    </location>
</feature>
<feature type="compositionally biased region" description="Polar residues" evidence="2">
    <location>
        <begin position="190"/>
        <end position="204"/>
    </location>
</feature>
<organism>
    <name type="scientific">Alcanivorax borkumensis (strain ATCC 700651 / DSM 11573 / NCIMB 13689 / SK2)</name>
    <dbReference type="NCBI Taxonomy" id="393595"/>
    <lineage>
        <taxon>Bacteria</taxon>
        <taxon>Pseudomonadati</taxon>
        <taxon>Pseudomonadota</taxon>
        <taxon>Gammaproteobacteria</taxon>
        <taxon>Oceanospirillales</taxon>
        <taxon>Alcanivoracaceae</taxon>
        <taxon>Alcanivorax</taxon>
    </lineage>
</organism>
<accession>Q0VM69</accession>